<name>SEQA_SHEHH</name>
<evidence type="ECO:0000255" key="1">
    <source>
        <dbReference type="HAMAP-Rule" id="MF_00908"/>
    </source>
</evidence>
<evidence type="ECO:0000305" key="2"/>
<gene>
    <name evidence="1" type="primary">seqA</name>
    <name type="ordered locus">Shal_2239</name>
</gene>
<protein>
    <recommendedName>
        <fullName evidence="1">Negative modulator of initiation of replication</fullName>
    </recommendedName>
</protein>
<accession>B0TUS0</accession>
<sequence length="186" mass="20624">MKYIEVDEELYRHIASKTEHIGESASDILRRILGLQVESVVQDAPEEISHPSLERVSPKPVKVAKVITKMTSTAVSDFTSLIDADVLAAQKGAVGRFLFILDTVHRASPVQFEQVLQIQGRDRLYFATSKDALLKASKSANPKEIGQSGFWVTTNNNTAKKRTILSEVLLQFGTDEAQVTDIIEKI</sequence>
<keyword id="KW-0963">Cytoplasm</keyword>
<keyword id="KW-0236">DNA replication inhibitor</keyword>
<keyword id="KW-0238">DNA-binding</keyword>
<dbReference type="EMBL" id="CP000931">
    <property type="protein sequence ID" value="ABZ76798.1"/>
    <property type="status" value="ALT_INIT"/>
    <property type="molecule type" value="Genomic_DNA"/>
</dbReference>
<dbReference type="RefSeq" id="WP_041415987.1">
    <property type="nucleotide sequence ID" value="NC_010334.1"/>
</dbReference>
<dbReference type="SMR" id="B0TUS0"/>
<dbReference type="STRING" id="458817.Shal_2239"/>
<dbReference type="KEGG" id="shl:Shal_2239"/>
<dbReference type="eggNOG" id="COG3057">
    <property type="taxonomic scope" value="Bacteria"/>
</dbReference>
<dbReference type="HOGENOM" id="CLU_099733_0_0_6"/>
<dbReference type="OrthoDB" id="5591069at2"/>
<dbReference type="Proteomes" id="UP000001317">
    <property type="component" value="Chromosome"/>
</dbReference>
<dbReference type="GO" id="GO:0005737">
    <property type="term" value="C:cytoplasm"/>
    <property type="evidence" value="ECO:0007669"/>
    <property type="project" value="UniProtKB-SubCell"/>
</dbReference>
<dbReference type="GO" id="GO:0003677">
    <property type="term" value="F:DNA binding"/>
    <property type="evidence" value="ECO:0007669"/>
    <property type="project" value="UniProtKB-UniRule"/>
</dbReference>
<dbReference type="GO" id="GO:0032297">
    <property type="term" value="P:negative regulation of DNA-templated DNA replication initiation"/>
    <property type="evidence" value="ECO:0007669"/>
    <property type="project" value="UniProtKB-UniRule"/>
</dbReference>
<dbReference type="GO" id="GO:0006355">
    <property type="term" value="P:regulation of DNA-templated transcription"/>
    <property type="evidence" value="ECO:0007669"/>
    <property type="project" value="InterPro"/>
</dbReference>
<dbReference type="Gene3D" id="1.10.1220.10">
    <property type="entry name" value="Met repressor-like"/>
    <property type="match status" value="1"/>
</dbReference>
<dbReference type="Gene3D" id="1.20.1380.10">
    <property type="entry name" value="Replication modulator SeqA, C-terminal DNA-binding domain"/>
    <property type="match status" value="1"/>
</dbReference>
<dbReference type="HAMAP" id="MF_00908">
    <property type="entry name" value="SeqA"/>
    <property type="match status" value="1"/>
</dbReference>
<dbReference type="InterPro" id="IPR013321">
    <property type="entry name" value="Arc_rbn_hlx_hlx"/>
</dbReference>
<dbReference type="InterPro" id="IPR010985">
    <property type="entry name" value="Ribbon_hlx_hlx"/>
</dbReference>
<dbReference type="InterPro" id="IPR005621">
    <property type="entry name" value="SeqA"/>
</dbReference>
<dbReference type="InterPro" id="IPR026577">
    <property type="entry name" value="SeqA_DNA-bd_C"/>
</dbReference>
<dbReference type="InterPro" id="IPR036835">
    <property type="entry name" value="SeqA_DNA-bd_C_sf"/>
</dbReference>
<dbReference type="InterPro" id="IPR033761">
    <property type="entry name" value="SeqA_N"/>
</dbReference>
<dbReference type="NCBIfam" id="NF008389">
    <property type="entry name" value="PRK11187.1"/>
    <property type="match status" value="1"/>
</dbReference>
<dbReference type="Pfam" id="PF03925">
    <property type="entry name" value="SeqA"/>
    <property type="match status" value="1"/>
</dbReference>
<dbReference type="Pfam" id="PF17206">
    <property type="entry name" value="SeqA_N"/>
    <property type="match status" value="1"/>
</dbReference>
<dbReference type="PIRSF" id="PIRSF019401">
    <property type="entry name" value="SeqA"/>
    <property type="match status" value="1"/>
</dbReference>
<dbReference type="SUPFAM" id="SSF82808">
    <property type="entry name" value="Replication modulator SeqA, C-terminal DNA-binding domain"/>
    <property type="match status" value="1"/>
</dbReference>
<dbReference type="SUPFAM" id="SSF47598">
    <property type="entry name" value="Ribbon-helix-helix"/>
    <property type="match status" value="1"/>
</dbReference>
<feature type="chain" id="PRO_0000413938" description="Negative modulator of initiation of replication">
    <location>
        <begin position="1"/>
        <end position="186"/>
    </location>
</feature>
<feature type="region of interest" description="Interaction with DNA" evidence="1">
    <location>
        <begin position="93"/>
        <end position="94"/>
    </location>
</feature>
<proteinExistence type="inferred from homology"/>
<organism>
    <name type="scientific">Shewanella halifaxensis (strain HAW-EB4)</name>
    <dbReference type="NCBI Taxonomy" id="458817"/>
    <lineage>
        <taxon>Bacteria</taxon>
        <taxon>Pseudomonadati</taxon>
        <taxon>Pseudomonadota</taxon>
        <taxon>Gammaproteobacteria</taxon>
        <taxon>Alteromonadales</taxon>
        <taxon>Shewanellaceae</taxon>
        <taxon>Shewanella</taxon>
    </lineage>
</organism>
<reference key="1">
    <citation type="submission" date="2008-01" db="EMBL/GenBank/DDBJ databases">
        <title>Complete sequence of Shewanella halifaxensis HAW-EB4.</title>
        <authorList>
            <consortium name="US DOE Joint Genome Institute"/>
            <person name="Copeland A."/>
            <person name="Lucas S."/>
            <person name="Lapidus A."/>
            <person name="Glavina del Rio T."/>
            <person name="Dalin E."/>
            <person name="Tice H."/>
            <person name="Bruce D."/>
            <person name="Goodwin L."/>
            <person name="Pitluck S."/>
            <person name="Sims D."/>
            <person name="Brettin T."/>
            <person name="Detter J.C."/>
            <person name="Han C."/>
            <person name="Kuske C.R."/>
            <person name="Schmutz J."/>
            <person name="Larimer F."/>
            <person name="Land M."/>
            <person name="Hauser L."/>
            <person name="Kyrpides N."/>
            <person name="Kim E."/>
            <person name="Zhao J.-S."/>
            <person name="Richardson P."/>
        </authorList>
    </citation>
    <scope>NUCLEOTIDE SEQUENCE [LARGE SCALE GENOMIC DNA]</scope>
    <source>
        <strain>HAW-EB4</strain>
    </source>
</reference>
<comment type="function">
    <text evidence="1">Negative regulator of replication initiation, which contributes to regulation of DNA replication and ensures that replication initiation occurs exactly once per chromosome per cell cycle. Binds to pairs of hemimethylated GATC sequences in the oriC region, thus preventing assembly of replication proteins and re-initiation at newly replicated origins. Repression is relieved when the region becomes fully methylated.</text>
</comment>
<comment type="subunit">
    <text evidence="1">Homodimer. Polymerizes to form helical filaments.</text>
</comment>
<comment type="subcellular location">
    <subcellularLocation>
        <location evidence="1">Cytoplasm</location>
    </subcellularLocation>
</comment>
<comment type="similarity">
    <text evidence="1">Belongs to the SeqA family.</text>
</comment>
<comment type="sequence caution" evidence="2">
    <conflict type="erroneous initiation">
        <sequence resource="EMBL-CDS" id="ABZ76798"/>
    </conflict>
    <text>Extended N-terminus.</text>
</comment>